<dbReference type="EC" id="2.5.1.31" evidence="1"/>
<dbReference type="EMBL" id="AE014075">
    <property type="protein sequence ID" value="AAN78703.1"/>
    <property type="molecule type" value="Genomic_DNA"/>
</dbReference>
<dbReference type="PDB" id="3SGT">
    <property type="method" value="X-ray"/>
    <property type="resolution" value="1.85 A"/>
    <property type="chains" value="A/B=1-253"/>
</dbReference>
<dbReference type="PDBsum" id="3SGT"/>
<dbReference type="SMR" id="P60473"/>
<dbReference type="STRING" id="199310.c0211"/>
<dbReference type="KEGG" id="ecc:c0211"/>
<dbReference type="eggNOG" id="COG0020">
    <property type="taxonomic scope" value="Bacteria"/>
</dbReference>
<dbReference type="HOGENOM" id="CLU_038505_1_1_6"/>
<dbReference type="BioCyc" id="ECOL199310:C0211-MONOMER"/>
<dbReference type="EvolutionaryTrace" id="P60473"/>
<dbReference type="PRO" id="PR:P60473"/>
<dbReference type="Proteomes" id="UP000001410">
    <property type="component" value="Chromosome"/>
</dbReference>
<dbReference type="GO" id="GO:0005829">
    <property type="term" value="C:cytosol"/>
    <property type="evidence" value="ECO:0007669"/>
    <property type="project" value="TreeGrafter"/>
</dbReference>
<dbReference type="GO" id="GO:0008834">
    <property type="term" value="F:ditrans,polycis-undecaprenyl-diphosphate synthase [(2E,6E)-farnesyl-diphosphate specific] activity"/>
    <property type="evidence" value="ECO:0007669"/>
    <property type="project" value="UniProtKB-UniRule"/>
</dbReference>
<dbReference type="GO" id="GO:0000287">
    <property type="term" value="F:magnesium ion binding"/>
    <property type="evidence" value="ECO:0007669"/>
    <property type="project" value="UniProtKB-UniRule"/>
</dbReference>
<dbReference type="GO" id="GO:0071555">
    <property type="term" value="P:cell wall organization"/>
    <property type="evidence" value="ECO:0007669"/>
    <property type="project" value="UniProtKB-KW"/>
</dbReference>
<dbReference type="GO" id="GO:0009252">
    <property type="term" value="P:peptidoglycan biosynthetic process"/>
    <property type="evidence" value="ECO:0007669"/>
    <property type="project" value="UniProtKB-UniRule"/>
</dbReference>
<dbReference type="GO" id="GO:0016094">
    <property type="term" value="P:polyprenol biosynthetic process"/>
    <property type="evidence" value="ECO:0007669"/>
    <property type="project" value="TreeGrafter"/>
</dbReference>
<dbReference type="GO" id="GO:0008360">
    <property type="term" value="P:regulation of cell shape"/>
    <property type="evidence" value="ECO:0007669"/>
    <property type="project" value="UniProtKB-KW"/>
</dbReference>
<dbReference type="CDD" id="cd00475">
    <property type="entry name" value="Cis_IPPS"/>
    <property type="match status" value="1"/>
</dbReference>
<dbReference type="FunFam" id="3.40.1180.10:FF:000001">
    <property type="entry name" value="(2E,6E)-farnesyl-diphosphate-specific ditrans,polycis-undecaprenyl-diphosphate synthase"/>
    <property type="match status" value="1"/>
</dbReference>
<dbReference type="Gene3D" id="3.40.1180.10">
    <property type="entry name" value="Decaprenyl diphosphate synthase-like"/>
    <property type="match status" value="1"/>
</dbReference>
<dbReference type="HAMAP" id="MF_01139">
    <property type="entry name" value="ISPT"/>
    <property type="match status" value="1"/>
</dbReference>
<dbReference type="InterPro" id="IPR001441">
    <property type="entry name" value="UPP_synth-like"/>
</dbReference>
<dbReference type="InterPro" id="IPR018520">
    <property type="entry name" value="UPP_synth-like_CS"/>
</dbReference>
<dbReference type="InterPro" id="IPR036424">
    <property type="entry name" value="UPP_synth-like_sf"/>
</dbReference>
<dbReference type="NCBIfam" id="NF007596">
    <property type="entry name" value="PRK10240.1"/>
    <property type="match status" value="1"/>
</dbReference>
<dbReference type="NCBIfam" id="NF011405">
    <property type="entry name" value="PRK14830.1"/>
    <property type="match status" value="1"/>
</dbReference>
<dbReference type="NCBIfam" id="TIGR00055">
    <property type="entry name" value="uppS"/>
    <property type="match status" value="1"/>
</dbReference>
<dbReference type="PANTHER" id="PTHR10291:SF0">
    <property type="entry name" value="DEHYDRODOLICHYL DIPHOSPHATE SYNTHASE 2"/>
    <property type="match status" value="1"/>
</dbReference>
<dbReference type="PANTHER" id="PTHR10291">
    <property type="entry name" value="DEHYDRODOLICHYL DIPHOSPHATE SYNTHASE FAMILY MEMBER"/>
    <property type="match status" value="1"/>
</dbReference>
<dbReference type="Pfam" id="PF01255">
    <property type="entry name" value="Prenyltransf"/>
    <property type="match status" value="1"/>
</dbReference>
<dbReference type="SUPFAM" id="SSF64005">
    <property type="entry name" value="Undecaprenyl diphosphate synthase"/>
    <property type="match status" value="1"/>
</dbReference>
<dbReference type="PROSITE" id="PS01066">
    <property type="entry name" value="UPP_SYNTHASE"/>
    <property type="match status" value="1"/>
</dbReference>
<reference key="1">
    <citation type="journal article" date="2002" name="Proc. Natl. Acad. Sci. U.S.A.">
        <title>Extensive mosaic structure revealed by the complete genome sequence of uropathogenic Escherichia coli.</title>
        <authorList>
            <person name="Welch R.A."/>
            <person name="Burland V."/>
            <person name="Plunkett G. III"/>
            <person name="Redford P."/>
            <person name="Roesch P."/>
            <person name="Rasko D."/>
            <person name="Buckles E.L."/>
            <person name="Liou S.-R."/>
            <person name="Boutin A."/>
            <person name="Hackett J."/>
            <person name="Stroud D."/>
            <person name="Mayhew G.F."/>
            <person name="Rose D.J."/>
            <person name="Zhou S."/>
            <person name="Schwartz D.C."/>
            <person name="Perna N.T."/>
            <person name="Mobley H.L.T."/>
            <person name="Donnenberg M.S."/>
            <person name="Blattner F.R."/>
        </authorList>
    </citation>
    <scope>NUCLEOTIDE SEQUENCE [LARGE SCALE GENOMIC DNA]</scope>
    <source>
        <strain>CFT073 / ATCC 700928 / UPEC</strain>
    </source>
</reference>
<keyword id="KW-0002">3D-structure</keyword>
<keyword id="KW-0133">Cell shape</keyword>
<keyword id="KW-0961">Cell wall biogenesis/degradation</keyword>
<keyword id="KW-0460">Magnesium</keyword>
<keyword id="KW-0479">Metal-binding</keyword>
<keyword id="KW-0573">Peptidoglycan synthesis</keyword>
<keyword id="KW-1185">Reference proteome</keyword>
<keyword id="KW-0808">Transferase</keyword>
<sequence>MMLSATQPLSEKLPAHGCRHVAIIMDGNGRWAKKQGKIRAFGHKAGAKSVRRAVSFAANNGIEALTLYAFSSENWNRPAQEVSALMELFVWALDSEVKSLHRHNVRLRIIGDTSRFNSRLQERIRKSEALTAGNTGLTLNIAANYGGRWDIVQGVRQLAEKVQQGNLQPDQIDEEMLNQHVCMHELAPVDLVIRTGGEHRISNFLLWQIAYAELYFTDVLWPDFDEQDFEGALNAFANRERRFGGTEPGDETA</sequence>
<organism>
    <name type="scientific">Escherichia coli O6:H1 (strain CFT073 / ATCC 700928 / UPEC)</name>
    <dbReference type="NCBI Taxonomy" id="199310"/>
    <lineage>
        <taxon>Bacteria</taxon>
        <taxon>Pseudomonadati</taxon>
        <taxon>Pseudomonadota</taxon>
        <taxon>Gammaproteobacteria</taxon>
        <taxon>Enterobacterales</taxon>
        <taxon>Enterobacteriaceae</taxon>
        <taxon>Escherichia</taxon>
    </lineage>
</organism>
<accession>P60473</accession>
<accession>P75668</accession>
<accession>Q47675</accession>
<accession>Q9R2E4</accession>
<feature type="chain" id="PRO_0000123610" description="Ditrans,polycis-undecaprenyl-diphosphate synthase ((2E,6E)-farnesyl-diphosphate specific)">
    <location>
        <begin position="1"/>
        <end position="253"/>
    </location>
</feature>
<feature type="active site" evidence="1">
    <location>
        <position position="26"/>
    </location>
</feature>
<feature type="active site" description="Proton acceptor" evidence="1">
    <location>
        <position position="74"/>
    </location>
</feature>
<feature type="binding site" evidence="1">
    <location>
        <position position="26"/>
    </location>
    <ligand>
        <name>Mg(2+)</name>
        <dbReference type="ChEBI" id="CHEBI:18420"/>
    </ligand>
</feature>
<feature type="binding site" evidence="1">
    <location>
        <begin position="27"/>
        <end position="30"/>
    </location>
    <ligand>
        <name>substrate</name>
    </ligand>
</feature>
<feature type="binding site" evidence="1">
    <location>
        <position position="31"/>
    </location>
    <ligand>
        <name>substrate</name>
    </ligand>
</feature>
<feature type="binding site" evidence="1">
    <location>
        <position position="39"/>
    </location>
    <ligand>
        <name>substrate</name>
    </ligand>
</feature>
<feature type="binding site" evidence="1">
    <location>
        <position position="43"/>
    </location>
    <ligand>
        <name>substrate</name>
    </ligand>
</feature>
<feature type="binding site" evidence="1">
    <location>
        <begin position="71"/>
        <end position="73"/>
    </location>
    <ligand>
        <name>substrate</name>
    </ligand>
</feature>
<feature type="binding site" evidence="1">
    <location>
        <position position="75"/>
    </location>
    <ligand>
        <name>substrate</name>
    </ligand>
</feature>
<feature type="binding site" evidence="1">
    <location>
        <position position="77"/>
    </location>
    <ligand>
        <name>substrate</name>
    </ligand>
</feature>
<feature type="binding site" evidence="1">
    <location>
        <position position="194"/>
    </location>
    <ligand>
        <name>substrate</name>
    </ligand>
</feature>
<feature type="binding site" evidence="1">
    <location>
        <position position="199"/>
    </location>
    <ligand>
        <name>Mg(2+)</name>
        <dbReference type="ChEBI" id="CHEBI:18420"/>
    </ligand>
</feature>
<feature type="binding site" evidence="1">
    <location>
        <begin position="200"/>
        <end position="202"/>
    </location>
    <ligand>
        <name>substrate</name>
    </ligand>
</feature>
<feature type="binding site" evidence="1">
    <location>
        <position position="213"/>
    </location>
    <ligand>
        <name>Mg(2+)</name>
        <dbReference type="ChEBI" id="CHEBI:18420"/>
    </ligand>
</feature>
<feature type="strand" evidence="2">
    <location>
        <begin position="19"/>
        <end position="25"/>
    </location>
</feature>
<feature type="helix" evidence="2">
    <location>
        <begin position="28"/>
        <end position="34"/>
    </location>
</feature>
<feature type="helix" evidence="2">
    <location>
        <begin position="39"/>
        <end position="59"/>
    </location>
</feature>
<feature type="strand" evidence="2">
    <location>
        <begin position="63"/>
        <end position="69"/>
    </location>
</feature>
<feature type="helix" evidence="2">
    <location>
        <begin position="79"/>
        <end position="102"/>
    </location>
</feature>
<feature type="strand" evidence="2">
    <location>
        <begin position="106"/>
        <end position="111"/>
    </location>
</feature>
<feature type="helix" evidence="2">
    <location>
        <begin position="118"/>
        <end position="131"/>
    </location>
</feature>
<feature type="strand" evidence="2">
    <location>
        <begin position="138"/>
        <end position="144"/>
    </location>
</feature>
<feature type="helix" evidence="2">
    <location>
        <begin position="147"/>
        <end position="163"/>
    </location>
</feature>
<feature type="helix" evidence="2">
    <location>
        <begin position="169"/>
        <end position="171"/>
    </location>
</feature>
<feature type="helix" evidence="2">
    <location>
        <begin position="174"/>
        <end position="178"/>
    </location>
</feature>
<feature type="turn" evidence="2">
    <location>
        <begin position="182"/>
        <end position="185"/>
    </location>
</feature>
<feature type="strand" evidence="2">
    <location>
        <begin position="191"/>
        <end position="194"/>
    </location>
</feature>
<feature type="helix" evidence="2">
    <location>
        <begin position="207"/>
        <end position="209"/>
    </location>
</feature>
<feature type="strand" evidence="2">
    <location>
        <begin position="213"/>
        <end position="216"/>
    </location>
</feature>
<feature type="helix" evidence="2">
    <location>
        <begin position="221"/>
        <end position="223"/>
    </location>
</feature>
<feature type="helix" evidence="2">
    <location>
        <begin position="226"/>
        <end position="239"/>
    </location>
</feature>
<comment type="function">
    <text evidence="1">Catalyzes the sequential condensation of isopentenyl diphosphate (IPP) with (2E,6E)-farnesyl diphosphate (E,E-FPP) to yield (2Z,6Z,10Z,14Z,18Z,22Z,26Z,30Z,34E,38E)-undecaprenyl diphosphate (di-trans,octa-cis-UPP). UPP is the precursor of glycosyl carrier lipid in the biosynthesis of bacterial cell wall polysaccharide components such as peptidoglycan and lipopolysaccharide.</text>
</comment>
<comment type="catalytic activity">
    <reaction evidence="1">
        <text>8 isopentenyl diphosphate + (2E,6E)-farnesyl diphosphate = di-trans,octa-cis-undecaprenyl diphosphate + 8 diphosphate</text>
        <dbReference type="Rhea" id="RHEA:27551"/>
        <dbReference type="ChEBI" id="CHEBI:33019"/>
        <dbReference type="ChEBI" id="CHEBI:58405"/>
        <dbReference type="ChEBI" id="CHEBI:128769"/>
        <dbReference type="ChEBI" id="CHEBI:175763"/>
        <dbReference type="EC" id="2.5.1.31"/>
    </reaction>
</comment>
<comment type="cofactor">
    <cofactor evidence="1">
        <name>Mg(2+)</name>
        <dbReference type="ChEBI" id="CHEBI:18420"/>
    </cofactor>
    <text evidence="1">Binds 2 magnesium ions per subunit.</text>
</comment>
<comment type="subunit">
    <text evidence="1">Homodimer.</text>
</comment>
<comment type="similarity">
    <text evidence="1">Belongs to the UPP synthase family.</text>
</comment>
<evidence type="ECO:0000255" key="1">
    <source>
        <dbReference type="HAMAP-Rule" id="MF_01139"/>
    </source>
</evidence>
<evidence type="ECO:0007829" key="2">
    <source>
        <dbReference type="PDB" id="3SGT"/>
    </source>
</evidence>
<protein>
    <recommendedName>
        <fullName evidence="1">Ditrans,polycis-undecaprenyl-diphosphate synthase ((2E,6E)-farnesyl-diphosphate specific)</fullName>
        <ecNumber evidence="1">2.5.1.31</ecNumber>
    </recommendedName>
    <alternativeName>
        <fullName evidence="1">Ditrans,polycis-undecaprenylcistransferase</fullName>
    </alternativeName>
    <alternativeName>
        <fullName evidence="1">Undecaprenyl diphosphate synthase</fullName>
        <shortName evidence="1">UDS</shortName>
    </alternativeName>
    <alternativeName>
        <fullName evidence="1">Undecaprenyl pyrophosphate synthase</fullName>
        <shortName evidence="1">UPP synthase</shortName>
    </alternativeName>
</protein>
<gene>
    <name evidence="1" type="primary">uppS</name>
    <name type="ordered locus">c0211</name>
</gene>
<name>UPPS_ECOL6</name>
<proteinExistence type="evidence at protein level"/>